<comment type="function">
    <text evidence="1">Probably deamidates glutamine residues to glutamate on methyl-accepting chemotaxis receptors (MCPs), playing an important role in chemotaxis.</text>
</comment>
<comment type="catalytic activity">
    <reaction evidence="1">
        <text>L-glutaminyl-[protein] + H2O = L-glutamyl-[protein] + NH4(+)</text>
        <dbReference type="Rhea" id="RHEA:16441"/>
        <dbReference type="Rhea" id="RHEA-COMP:10207"/>
        <dbReference type="Rhea" id="RHEA-COMP:10208"/>
        <dbReference type="ChEBI" id="CHEBI:15377"/>
        <dbReference type="ChEBI" id="CHEBI:28938"/>
        <dbReference type="ChEBI" id="CHEBI:29973"/>
        <dbReference type="ChEBI" id="CHEBI:30011"/>
        <dbReference type="EC" id="3.5.1.44"/>
    </reaction>
</comment>
<comment type="similarity">
    <text evidence="1">Belongs to the CheD family.</text>
</comment>
<feature type="chain" id="PRO_0000251068" description="Probable chemoreceptor glutamine deamidase CheD">
    <location>
        <begin position="1"/>
        <end position="165"/>
    </location>
</feature>
<sequence length="165" mass="17289">MSDRRLEAVGLGELKVADRPDQVLVCYGLGSCVGLALYDPVVRIGAMVHVVLPDSSMGRGREAPPGKYADTGVEAAVAALVDAGASRSRLIAKAAGGARMLRLAGSNPQLDIGARNTEAVRAALARHQIRLVAEDMGGTYGRTLQLFIETGRVLVSTVGRGEHEL</sequence>
<protein>
    <recommendedName>
        <fullName evidence="1">Probable chemoreceptor glutamine deamidase CheD</fullName>
        <ecNumber evidence="1">3.5.1.44</ecNumber>
    </recommendedName>
</protein>
<gene>
    <name evidence="1" type="primary">cheD</name>
    <name type="ordered locus">STH1539</name>
</gene>
<reference key="1">
    <citation type="journal article" date="2004" name="Nucleic Acids Res.">
        <title>Genome sequence of Symbiobacterium thermophilum, an uncultivable bacterium that depends on microbial commensalism.</title>
        <authorList>
            <person name="Ueda K."/>
            <person name="Yamashita A."/>
            <person name="Ishikawa J."/>
            <person name="Shimada M."/>
            <person name="Watsuji T."/>
            <person name="Morimura K."/>
            <person name="Ikeda H."/>
            <person name="Hattori M."/>
            <person name="Beppu T."/>
        </authorList>
    </citation>
    <scope>NUCLEOTIDE SEQUENCE [LARGE SCALE GENOMIC DNA]</scope>
    <source>
        <strain>DSM 24528 / JCM 14929 / IAM 14863 / T</strain>
    </source>
</reference>
<accession>Q67P69</accession>
<proteinExistence type="inferred from homology"/>
<organism>
    <name type="scientific">Symbiobacterium thermophilum (strain DSM 24528 / JCM 14929 / IAM 14863 / T)</name>
    <dbReference type="NCBI Taxonomy" id="292459"/>
    <lineage>
        <taxon>Bacteria</taxon>
        <taxon>Bacillati</taxon>
        <taxon>Bacillota</taxon>
        <taxon>Clostridia</taxon>
        <taxon>Eubacteriales</taxon>
        <taxon>Symbiobacteriaceae</taxon>
        <taxon>Symbiobacterium</taxon>
    </lineage>
</organism>
<evidence type="ECO:0000255" key="1">
    <source>
        <dbReference type="HAMAP-Rule" id="MF_01440"/>
    </source>
</evidence>
<keyword id="KW-0145">Chemotaxis</keyword>
<keyword id="KW-0378">Hydrolase</keyword>
<keyword id="KW-1185">Reference proteome</keyword>
<name>CHED_SYMTH</name>
<dbReference type="EC" id="3.5.1.44" evidence="1"/>
<dbReference type="EMBL" id="AP006840">
    <property type="protein sequence ID" value="BAD40524.1"/>
    <property type="molecule type" value="Genomic_DNA"/>
</dbReference>
<dbReference type="RefSeq" id="WP_011195669.1">
    <property type="nucleotide sequence ID" value="NC_006177.1"/>
</dbReference>
<dbReference type="SMR" id="Q67P69"/>
<dbReference type="STRING" id="292459.STH1539"/>
<dbReference type="KEGG" id="sth:STH1539"/>
<dbReference type="eggNOG" id="COG1871">
    <property type="taxonomic scope" value="Bacteria"/>
</dbReference>
<dbReference type="HOGENOM" id="CLU_087854_2_0_9"/>
<dbReference type="OrthoDB" id="9807202at2"/>
<dbReference type="Proteomes" id="UP000000417">
    <property type="component" value="Chromosome"/>
</dbReference>
<dbReference type="GO" id="GO:0050568">
    <property type="term" value="F:protein-glutamine glutaminase activity"/>
    <property type="evidence" value="ECO:0007669"/>
    <property type="project" value="UniProtKB-UniRule"/>
</dbReference>
<dbReference type="GO" id="GO:0006935">
    <property type="term" value="P:chemotaxis"/>
    <property type="evidence" value="ECO:0007669"/>
    <property type="project" value="UniProtKB-UniRule"/>
</dbReference>
<dbReference type="CDD" id="cd16352">
    <property type="entry name" value="CheD"/>
    <property type="match status" value="1"/>
</dbReference>
<dbReference type="Gene3D" id="3.30.1330.200">
    <property type="match status" value="1"/>
</dbReference>
<dbReference type="HAMAP" id="MF_01440">
    <property type="entry name" value="CheD"/>
    <property type="match status" value="1"/>
</dbReference>
<dbReference type="InterPro" id="IPR038592">
    <property type="entry name" value="CheD-like_sf"/>
</dbReference>
<dbReference type="InterPro" id="IPR005659">
    <property type="entry name" value="Chemorcpt_Glu_NH3ase_CheD"/>
</dbReference>
<dbReference type="InterPro" id="IPR011324">
    <property type="entry name" value="Cytotoxic_necrot_fac-like_cat"/>
</dbReference>
<dbReference type="PANTHER" id="PTHR35147">
    <property type="entry name" value="CHEMORECEPTOR GLUTAMINE DEAMIDASE CHED-RELATED"/>
    <property type="match status" value="1"/>
</dbReference>
<dbReference type="PANTHER" id="PTHR35147:SF1">
    <property type="entry name" value="CHEMORECEPTOR GLUTAMINE DEAMIDASE CHED-RELATED"/>
    <property type="match status" value="1"/>
</dbReference>
<dbReference type="Pfam" id="PF03975">
    <property type="entry name" value="CheD"/>
    <property type="match status" value="1"/>
</dbReference>
<dbReference type="SUPFAM" id="SSF64438">
    <property type="entry name" value="CNF1/YfiH-like putative cysteine hydrolases"/>
    <property type="match status" value="1"/>
</dbReference>